<organism>
    <name type="scientific">Yersinia pseudotuberculosis serotype O:1b (strain IP 31758)</name>
    <dbReference type="NCBI Taxonomy" id="349747"/>
    <lineage>
        <taxon>Bacteria</taxon>
        <taxon>Pseudomonadati</taxon>
        <taxon>Pseudomonadota</taxon>
        <taxon>Gammaproteobacteria</taxon>
        <taxon>Enterobacterales</taxon>
        <taxon>Yersiniaceae</taxon>
        <taxon>Yersinia</taxon>
    </lineage>
</organism>
<feature type="chain" id="PRO_1000061261" description="Chaperonin GroEL">
    <location>
        <begin position="1"/>
        <end position="548"/>
    </location>
</feature>
<feature type="binding site" evidence="1">
    <location>
        <begin position="30"/>
        <end position="33"/>
    </location>
    <ligand>
        <name>ATP</name>
        <dbReference type="ChEBI" id="CHEBI:30616"/>
    </ligand>
</feature>
<feature type="binding site" evidence="1">
    <location>
        <position position="51"/>
    </location>
    <ligand>
        <name>ATP</name>
        <dbReference type="ChEBI" id="CHEBI:30616"/>
    </ligand>
</feature>
<feature type="binding site" evidence="1">
    <location>
        <begin position="87"/>
        <end position="91"/>
    </location>
    <ligand>
        <name>ATP</name>
        <dbReference type="ChEBI" id="CHEBI:30616"/>
    </ligand>
</feature>
<feature type="binding site" evidence="1">
    <location>
        <position position="415"/>
    </location>
    <ligand>
        <name>ATP</name>
        <dbReference type="ChEBI" id="CHEBI:30616"/>
    </ligand>
</feature>
<feature type="binding site" evidence="1">
    <location>
        <position position="495"/>
    </location>
    <ligand>
        <name>ATP</name>
        <dbReference type="ChEBI" id="CHEBI:30616"/>
    </ligand>
</feature>
<dbReference type="EC" id="5.6.1.7" evidence="1"/>
<dbReference type="EMBL" id="CP000720">
    <property type="protein sequence ID" value="ABS49651.1"/>
    <property type="molecule type" value="Genomic_DNA"/>
</dbReference>
<dbReference type="RefSeq" id="WP_002209128.1">
    <property type="nucleotide sequence ID" value="NC_009708.1"/>
</dbReference>
<dbReference type="SMR" id="A7FN01"/>
<dbReference type="GeneID" id="57974257"/>
<dbReference type="KEGG" id="ypi:YpsIP31758_3675"/>
<dbReference type="HOGENOM" id="CLU_016503_3_0_6"/>
<dbReference type="Proteomes" id="UP000002412">
    <property type="component" value="Chromosome"/>
</dbReference>
<dbReference type="GO" id="GO:0005737">
    <property type="term" value="C:cytoplasm"/>
    <property type="evidence" value="ECO:0007669"/>
    <property type="project" value="UniProtKB-SubCell"/>
</dbReference>
<dbReference type="GO" id="GO:0005524">
    <property type="term" value="F:ATP binding"/>
    <property type="evidence" value="ECO:0007669"/>
    <property type="project" value="UniProtKB-UniRule"/>
</dbReference>
<dbReference type="GO" id="GO:0140662">
    <property type="term" value="F:ATP-dependent protein folding chaperone"/>
    <property type="evidence" value="ECO:0007669"/>
    <property type="project" value="InterPro"/>
</dbReference>
<dbReference type="GO" id="GO:0016853">
    <property type="term" value="F:isomerase activity"/>
    <property type="evidence" value="ECO:0007669"/>
    <property type="project" value="UniProtKB-KW"/>
</dbReference>
<dbReference type="GO" id="GO:0051082">
    <property type="term" value="F:unfolded protein binding"/>
    <property type="evidence" value="ECO:0007669"/>
    <property type="project" value="UniProtKB-UniRule"/>
</dbReference>
<dbReference type="GO" id="GO:0042026">
    <property type="term" value="P:protein refolding"/>
    <property type="evidence" value="ECO:0007669"/>
    <property type="project" value="UniProtKB-UniRule"/>
</dbReference>
<dbReference type="CDD" id="cd03344">
    <property type="entry name" value="GroEL"/>
    <property type="match status" value="1"/>
</dbReference>
<dbReference type="FunFam" id="1.10.560.10:FF:000001">
    <property type="entry name" value="60 kDa chaperonin"/>
    <property type="match status" value="1"/>
</dbReference>
<dbReference type="FunFam" id="3.50.7.10:FF:000001">
    <property type="entry name" value="60 kDa chaperonin"/>
    <property type="match status" value="1"/>
</dbReference>
<dbReference type="Gene3D" id="3.50.7.10">
    <property type="entry name" value="GroEL"/>
    <property type="match status" value="1"/>
</dbReference>
<dbReference type="Gene3D" id="1.10.560.10">
    <property type="entry name" value="GroEL-like equatorial domain"/>
    <property type="match status" value="1"/>
</dbReference>
<dbReference type="Gene3D" id="3.30.260.10">
    <property type="entry name" value="TCP-1-like chaperonin intermediate domain"/>
    <property type="match status" value="1"/>
</dbReference>
<dbReference type="HAMAP" id="MF_00600">
    <property type="entry name" value="CH60"/>
    <property type="match status" value="1"/>
</dbReference>
<dbReference type="InterPro" id="IPR018370">
    <property type="entry name" value="Chaperonin_Cpn60_CS"/>
</dbReference>
<dbReference type="InterPro" id="IPR001844">
    <property type="entry name" value="Cpn60/GroEL"/>
</dbReference>
<dbReference type="InterPro" id="IPR002423">
    <property type="entry name" value="Cpn60/GroEL/TCP-1"/>
</dbReference>
<dbReference type="InterPro" id="IPR027409">
    <property type="entry name" value="GroEL-like_apical_dom_sf"/>
</dbReference>
<dbReference type="InterPro" id="IPR027413">
    <property type="entry name" value="GROEL-like_equatorial_sf"/>
</dbReference>
<dbReference type="InterPro" id="IPR027410">
    <property type="entry name" value="TCP-1-like_intermed_sf"/>
</dbReference>
<dbReference type="NCBIfam" id="TIGR02348">
    <property type="entry name" value="GroEL"/>
    <property type="match status" value="1"/>
</dbReference>
<dbReference type="NCBIfam" id="NF000592">
    <property type="entry name" value="PRK00013.1"/>
    <property type="match status" value="1"/>
</dbReference>
<dbReference type="NCBIfam" id="NF009487">
    <property type="entry name" value="PRK12849.1"/>
    <property type="match status" value="1"/>
</dbReference>
<dbReference type="NCBIfam" id="NF009488">
    <property type="entry name" value="PRK12850.1"/>
    <property type="match status" value="1"/>
</dbReference>
<dbReference type="NCBIfam" id="NF009489">
    <property type="entry name" value="PRK12851.1"/>
    <property type="match status" value="1"/>
</dbReference>
<dbReference type="PANTHER" id="PTHR45633">
    <property type="entry name" value="60 KDA HEAT SHOCK PROTEIN, MITOCHONDRIAL"/>
    <property type="match status" value="1"/>
</dbReference>
<dbReference type="Pfam" id="PF00118">
    <property type="entry name" value="Cpn60_TCP1"/>
    <property type="match status" value="1"/>
</dbReference>
<dbReference type="PRINTS" id="PR00298">
    <property type="entry name" value="CHAPERONIN60"/>
</dbReference>
<dbReference type="SUPFAM" id="SSF52029">
    <property type="entry name" value="GroEL apical domain-like"/>
    <property type="match status" value="1"/>
</dbReference>
<dbReference type="SUPFAM" id="SSF48592">
    <property type="entry name" value="GroEL equatorial domain-like"/>
    <property type="match status" value="1"/>
</dbReference>
<dbReference type="SUPFAM" id="SSF54849">
    <property type="entry name" value="GroEL-intermediate domain like"/>
    <property type="match status" value="1"/>
</dbReference>
<dbReference type="PROSITE" id="PS00296">
    <property type="entry name" value="CHAPERONINS_CPN60"/>
    <property type="match status" value="1"/>
</dbReference>
<keyword id="KW-0067">ATP-binding</keyword>
<keyword id="KW-0143">Chaperone</keyword>
<keyword id="KW-0963">Cytoplasm</keyword>
<keyword id="KW-0413">Isomerase</keyword>
<keyword id="KW-0547">Nucleotide-binding</keyword>
<protein>
    <recommendedName>
        <fullName evidence="1">Chaperonin GroEL</fullName>
        <ecNumber evidence="1">5.6.1.7</ecNumber>
    </recommendedName>
    <alternativeName>
        <fullName evidence="1">60 kDa chaperonin</fullName>
    </alternativeName>
    <alternativeName>
        <fullName evidence="1">Chaperonin-60</fullName>
        <shortName evidence="1">Cpn60</shortName>
    </alternativeName>
</protein>
<gene>
    <name evidence="1" type="primary">groEL</name>
    <name evidence="1" type="synonym">groL</name>
    <name type="ordered locus">YpsIP31758_3675</name>
</gene>
<sequence length="548" mass="57431">MAAKDVKFGNDARIKMLRGVNILADAVKVTLGPKGRNVVLDKSFGSPTITKDGVSVAREIELEDKFENMGAQMVKEVASKANDAAGDGTTTATVLAQSIITEGLKAVAAGMNPMDLKRGIDKAVIAAVEELKKLSVPCSDSKAIAQVGTISANSDSTVGELIAQAMEKVGKEGVITVEEGSGLQDELDVVEGMQFDRGYLSPYFINKPETGSIELESPFILLADKKISNIREMLPVLEAVAKAGKPLLIIAEDVEGEALATLVVNTMRGIVKVAAVKAPGFGDRRKAMLQDIATLTAGTVISEEIGLELEKTTLEDLGQAKRVVINKDTTIIIDGVGDEAAIQGRVAQIRQQIEDATSDYDKEKLQERVAKLAGGVAVIKVGAATEVEMKEKKARVEDALHATRAAVEEGVVAGGGVALIRAAHAIAGLKGDNEDQNVGIKVALRAMESPLRQIVVNAGEEASVIANKVKAGEGSFGYNAYTEEYGDMIAMGILDPTKVTRSALQYAASIAGLMITTECMVTDLPRDDKGADMGAGGMGGMGGMGGMM</sequence>
<reference key="1">
    <citation type="journal article" date="2007" name="PLoS Genet.">
        <title>The complete genome sequence of Yersinia pseudotuberculosis IP31758, the causative agent of Far East scarlet-like fever.</title>
        <authorList>
            <person name="Eppinger M."/>
            <person name="Rosovitz M.J."/>
            <person name="Fricke W.F."/>
            <person name="Rasko D.A."/>
            <person name="Kokorina G."/>
            <person name="Fayolle C."/>
            <person name="Lindler L.E."/>
            <person name="Carniel E."/>
            <person name="Ravel J."/>
        </authorList>
    </citation>
    <scope>NUCLEOTIDE SEQUENCE [LARGE SCALE GENOMIC DNA]</scope>
    <source>
        <strain>IP 31758</strain>
    </source>
</reference>
<accession>A7FN01</accession>
<name>CH60_YERP3</name>
<comment type="function">
    <text evidence="1">Together with its co-chaperonin GroES, plays an essential role in assisting protein folding. The GroEL-GroES system forms a nano-cage that allows encapsulation of the non-native substrate proteins and provides a physical environment optimized to promote and accelerate protein folding.</text>
</comment>
<comment type="catalytic activity">
    <reaction evidence="1">
        <text>ATP + H2O + a folded polypeptide = ADP + phosphate + an unfolded polypeptide.</text>
        <dbReference type="EC" id="5.6.1.7"/>
    </reaction>
</comment>
<comment type="subunit">
    <text evidence="1">Forms a cylinder of 14 subunits composed of two heptameric rings stacked back-to-back. Interacts with the co-chaperonin GroES.</text>
</comment>
<comment type="subcellular location">
    <subcellularLocation>
        <location evidence="1">Cytoplasm</location>
    </subcellularLocation>
</comment>
<comment type="similarity">
    <text evidence="1">Belongs to the chaperonin (HSP60) family.</text>
</comment>
<proteinExistence type="inferred from homology"/>
<evidence type="ECO:0000255" key="1">
    <source>
        <dbReference type="HAMAP-Rule" id="MF_00600"/>
    </source>
</evidence>